<dbReference type="EMBL" id="U88365">
    <property type="protein sequence ID" value="AAD41538.1"/>
    <property type="molecule type" value="mRNA"/>
</dbReference>
<dbReference type="SMR" id="Q9XS38"/>
<dbReference type="GlyCosmos" id="Q9XS38">
    <property type="glycosylation" value="1 site, No reported glycans"/>
</dbReference>
<dbReference type="GO" id="GO:0005615">
    <property type="term" value="C:extracellular space"/>
    <property type="evidence" value="ECO:0007669"/>
    <property type="project" value="UniProtKB-KW"/>
</dbReference>
<dbReference type="GO" id="GO:0005125">
    <property type="term" value="F:cytokine activity"/>
    <property type="evidence" value="ECO:0007669"/>
    <property type="project" value="UniProtKB-KW"/>
</dbReference>
<dbReference type="GO" id="GO:0008083">
    <property type="term" value="F:growth factor activity"/>
    <property type="evidence" value="ECO:0007669"/>
    <property type="project" value="UniProtKB-KW"/>
</dbReference>
<dbReference type="GO" id="GO:0005134">
    <property type="term" value="F:interleukin-2 receptor binding"/>
    <property type="evidence" value="ECO:0007669"/>
    <property type="project" value="InterPro"/>
</dbReference>
<dbReference type="GO" id="GO:0002250">
    <property type="term" value="P:adaptive immune response"/>
    <property type="evidence" value="ECO:0007669"/>
    <property type="project" value="UniProtKB-KW"/>
</dbReference>
<dbReference type="FunFam" id="1.20.1250.10:FF:000025">
    <property type="entry name" value="Interleukin-2"/>
    <property type="match status" value="1"/>
</dbReference>
<dbReference type="Gene3D" id="1.20.1250.10">
    <property type="match status" value="1"/>
</dbReference>
<dbReference type="InterPro" id="IPR009079">
    <property type="entry name" value="4_helix_cytokine-like_core"/>
</dbReference>
<dbReference type="InterPro" id="IPR000779">
    <property type="entry name" value="IL-2"/>
</dbReference>
<dbReference type="InterPro" id="IPR030477">
    <property type="entry name" value="IL-2_CS"/>
</dbReference>
<dbReference type="PANTHER" id="PTHR48487">
    <property type="entry name" value="INTERLEUKIN-2"/>
    <property type="match status" value="1"/>
</dbReference>
<dbReference type="PANTHER" id="PTHR48487:SF1">
    <property type="entry name" value="INTERLEUKIN-2"/>
    <property type="match status" value="1"/>
</dbReference>
<dbReference type="Pfam" id="PF00715">
    <property type="entry name" value="IL2"/>
    <property type="match status" value="1"/>
</dbReference>
<dbReference type="PRINTS" id="PR00265">
    <property type="entry name" value="INTERLEUKIN2"/>
</dbReference>
<dbReference type="SMART" id="SM00189">
    <property type="entry name" value="IL2"/>
    <property type="match status" value="1"/>
</dbReference>
<dbReference type="SUPFAM" id="SSF47266">
    <property type="entry name" value="4-helical cytokines"/>
    <property type="match status" value="1"/>
</dbReference>
<dbReference type="PROSITE" id="PS00424">
    <property type="entry name" value="INTERLEUKIN_2"/>
    <property type="match status" value="1"/>
</dbReference>
<sequence length="154" mass="17676">MYRMQLLSCIALSLALITNSAPTSSSTKKTQLQLEHLLLDLQMLLNGINNYKNPKLTRMLTFKFYMPKKATELKHLQCLEEELKPLEEVLNLAQSKNFHLRDTRDIISNINVLVLELKGSETTFTCEYDDDTATIIEFLNGWITFCQSIISTLT</sequence>
<comment type="function">
    <text evidence="2">Cytokine produced by activated CD4-positive helper T-cells and to a lesser extend activated CD8-positive T-cells and natural killer (NK) cells that plays pivotal roles in the immune response and tolerance. Binds to a receptor complex composed of either the high-affinity trimeric IL-2R (IL2RA/CD25, IL2RB/CD122 and IL2RG/CD132) or the low-affinity dimeric IL-2R (IL2RB and IL2RG). Interaction with the receptor leads to oligomerization and conformation changes in the IL-2R subunits resulting in downstream signaling starting with phosphorylation of JAK1 and JAK3. In turn, JAK1 and JAK3 phosphorylate the receptor to form a docking site leading to the phosphorylation of several substrates including STAT5. This process leads to activation of several pathways including STAT, phosphoinositide-3-kinase/PI3K and mitogen-activated protein kinase/MAPK pathways. Functions as a T-cell growth factor and can increase NK-cell cytolytic activity as well. Promotes strong proliferation of activated B-cells and subsequently immunoglobulin production. Plays a pivotal role in regulating the adaptive immune system by controlling the survival and proliferation of regulatory T-cells, which are required for the maintenance of immune tolerance. Moreover, participates in the differentiation and homeostasis of effector T-cell subsets, including Th1, Th2, Th17 as well as memory CD8-positive T-cells.</text>
</comment>
<comment type="subcellular location">
    <subcellularLocation>
        <location evidence="1">Secreted</location>
    </subcellularLocation>
</comment>
<comment type="similarity">
    <text evidence="3">Belongs to the IL-2 family.</text>
</comment>
<reference key="1">
    <citation type="submission" date="1997-02" db="EMBL/GenBank/DDBJ databases">
        <authorList>
            <person name="Murillo L.A."/>
            <person name="Hernandez E."/>
            <person name="Echeverry S.J."/>
            <person name="Mendez J.A."/>
            <person name="Moreno A."/>
            <person name="Patarroyo M.E."/>
        </authorList>
    </citation>
    <scope>NUCLEOTIDE SEQUENCE [MRNA]</scope>
</reference>
<feature type="signal peptide" evidence="1">
    <location>
        <begin position="1"/>
        <end position="20"/>
    </location>
</feature>
<feature type="chain" id="PRO_0000015497" description="Interleukin-2">
    <location>
        <begin position="21"/>
        <end position="154"/>
    </location>
</feature>
<feature type="glycosylation site" description="O-linked (GalNAc...) threonine" evidence="1">
    <location>
        <position position="23"/>
    </location>
</feature>
<feature type="disulfide bond" evidence="1">
    <location>
        <begin position="78"/>
        <end position="126"/>
    </location>
</feature>
<organism>
    <name type="scientific">Papio hamadryas</name>
    <name type="common">Hamadryas baboon</name>
    <dbReference type="NCBI Taxonomy" id="9557"/>
    <lineage>
        <taxon>Eukaryota</taxon>
        <taxon>Metazoa</taxon>
        <taxon>Chordata</taxon>
        <taxon>Craniata</taxon>
        <taxon>Vertebrata</taxon>
        <taxon>Euteleostomi</taxon>
        <taxon>Mammalia</taxon>
        <taxon>Eutheria</taxon>
        <taxon>Euarchontoglires</taxon>
        <taxon>Primates</taxon>
        <taxon>Haplorrhini</taxon>
        <taxon>Catarrhini</taxon>
        <taxon>Cercopithecidae</taxon>
        <taxon>Cercopithecinae</taxon>
        <taxon>Papio</taxon>
    </lineage>
</organism>
<gene>
    <name type="primary">IL2</name>
</gene>
<proteinExistence type="evidence at transcript level"/>
<evidence type="ECO:0000250" key="1"/>
<evidence type="ECO:0000250" key="2">
    <source>
        <dbReference type="UniProtKB" id="P60568"/>
    </source>
</evidence>
<evidence type="ECO:0000305" key="3"/>
<name>IL2_PAPHA</name>
<protein>
    <recommendedName>
        <fullName>Interleukin-2</fullName>
        <shortName>IL-2</shortName>
    </recommendedName>
    <alternativeName>
        <fullName>T-cell growth factor</fullName>
        <shortName>TCGF</shortName>
    </alternativeName>
</protein>
<accession>Q9XS38</accession>
<keyword id="KW-1064">Adaptive immunity</keyword>
<keyword id="KW-0202">Cytokine</keyword>
<keyword id="KW-1015">Disulfide bond</keyword>
<keyword id="KW-0325">Glycoprotein</keyword>
<keyword id="KW-0339">Growth factor</keyword>
<keyword id="KW-0391">Immunity</keyword>
<keyword id="KW-0964">Secreted</keyword>
<keyword id="KW-0732">Signal</keyword>